<sequence>MRKYEIMYIIRPGVEEEAQKALVERFAGVLTNNGAEIINTKEWGKRRLAYEINDLREGFYMILNVKSNAEAINEFDRLAKINEDILRHIVVKEEEK</sequence>
<comment type="function">
    <text evidence="1">Binds together with bS18 to 16S ribosomal RNA.</text>
</comment>
<comment type="similarity">
    <text evidence="1">Belongs to the bacterial ribosomal protein bS6 family.</text>
</comment>
<dbReference type="EMBL" id="CP001176">
    <property type="protein sequence ID" value="ACK61512.1"/>
    <property type="molecule type" value="Genomic_DNA"/>
</dbReference>
<dbReference type="RefSeq" id="WP_001233778.1">
    <property type="nucleotide sequence ID" value="NZ_VEHB01000004.1"/>
</dbReference>
<dbReference type="SMR" id="B7HGD4"/>
<dbReference type="GeneID" id="83639165"/>
<dbReference type="KEGG" id="bcb:BCB4264_A5601"/>
<dbReference type="HOGENOM" id="CLU_113441_5_3_9"/>
<dbReference type="Proteomes" id="UP000007096">
    <property type="component" value="Chromosome"/>
</dbReference>
<dbReference type="GO" id="GO:0005737">
    <property type="term" value="C:cytoplasm"/>
    <property type="evidence" value="ECO:0007669"/>
    <property type="project" value="UniProtKB-ARBA"/>
</dbReference>
<dbReference type="GO" id="GO:1990904">
    <property type="term" value="C:ribonucleoprotein complex"/>
    <property type="evidence" value="ECO:0007669"/>
    <property type="project" value="UniProtKB-KW"/>
</dbReference>
<dbReference type="GO" id="GO:0005840">
    <property type="term" value="C:ribosome"/>
    <property type="evidence" value="ECO:0007669"/>
    <property type="project" value="UniProtKB-KW"/>
</dbReference>
<dbReference type="GO" id="GO:0070181">
    <property type="term" value="F:small ribosomal subunit rRNA binding"/>
    <property type="evidence" value="ECO:0007669"/>
    <property type="project" value="TreeGrafter"/>
</dbReference>
<dbReference type="GO" id="GO:0003735">
    <property type="term" value="F:structural constituent of ribosome"/>
    <property type="evidence" value="ECO:0007669"/>
    <property type="project" value="InterPro"/>
</dbReference>
<dbReference type="GO" id="GO:0006412">
    <property type="term" value="P:translation"/>
    <property type="evidence" value="ECO:0007669"/>
    <property type="project" value="UniProtKB-UniRule"/>
</dbReference>
<dbReference type="CDD" id="cd00473">
    <property type="entry name" value="bS6"/>
    <property type="match status" value="1"/>
</dbReference>
<dbReference type="FunFam" id="3.30.70.60:FF:000002">
    <property type="entry name" value="30S ribosomal protein S6"/>
    <property type="match status" value="1"/>
</dbReference>
<dbReference type="Gene3D" id="3.30.70.60">
    <property type="match status" value="1"/>
</dbReference>
<dbReference type="HAMAP" id="MF_00360">
    <property type="entry name" value="Ribosomal_bS6"/>
    <property type="match status" value="1"/>
</dbReference>
<dbReference type="InterPro" id="IPR000529">
    <property type="entry name" value="Ribosomal_bS6"/>
</dbReference>
<dbReference type="InterPro" id="IPR020815">
    <property type="entry name" value="Ribosomal_bS6_CS"/>
</dbReference>
<dbReference type="InterPro" id="IPR035980">
    <property type="entry name" value="Ribosomal_bS6_sf"/>
</dbReference>
<dbReference type="InterPro" id="IPR020814">
    <property type="entry name" value="Ribosomal_S6_plastid/chlpt"/>
</dbReference>
<dbReference type="InterPro" id="IPR014717">
    <property type="entry name" value="Transl_elong_EF1B/ribsomal_bS6"/>
</dbReference>
<dbReference type="NCBIfam" id="TIGR00166">
    <property type="entry name" value="S6"/>
    <property type="match status" value="1"/>
</dbReference>
<dbReference type="PANTHER" id="PTHR21011">
    <property type="entry name" value="MITOCHONDRIAL 28S RIBOSOMAL PROTEIN S6"/>
    <property type="match status" value="1"/>
</dbReference>
<dbReference type="PANTHER" id="PTHR21011:SF1">
    <property type="entry name" value="SMALL RIBOSOMAL SUBUNIT PROTEIN BS6M"/>
    <property type="match status" value="1"/>
</dbReference>
<dbReference type="Pfam" id="PF01250">
    <property type="entry name" value="Ribosomal_S6"/>
    <property type="match status" value="1"/>
</dbReference>
<dbReference type="SUPFAM" id="SSF54995">
    <property type="entry name" value="Ribosomal protein S6"/>
    <property type="match status" value="1"/>
</dbReference>
<dbReference type="PROSITE" id="PS01048">
    <property type="entry name" value="RIBOSOMAL_S6"/>
    <property type="match status" value="1"/>
</dbReference>
<name>RS6_BACC4</name>
<feature type="chain" id="PRO_1000120706" description="Small ribosomal subunit protein bS6">
    <location>
        <begin position="1"/>
        <end position="96"/>
    </location>
</feature>
<proteinExistence type="inferred from homology"/>
<reference key="1">
    <citation type="submission" date="2008-10" db="EMBL/GenBank/DDBJ databases">
        <title>Genome sequence of Bacillus cereus B4264.</title>
        <authorList>
            <person name="Dodson R.J."/>
            <person name="Durkin A.S."/>
            <person name="Rosovitz M.J."/>
            <person name="Rasko D.A."/>
            <person name="Hoffmaster A."/>
            <person name="Ravel J."/>
            <person name="Sutton G."/>
        </authorList>
    </citation>
    <scope>NUCLEOTIDE SEQUENCE [LARGE SCALE GENOMIC DNA]</scope>
    <source>
        <strain>B4264</strain>
    </source>
</reference>
<evidence type="ECO:0000255" key="1">
    <source>
        <dbReference type="HAMAP-Rule" id="MF_00360"/>
    </source>
</evidence>
<evidence type="ECO:0000305" key="2"/>
<keyword id="KW-0687">Ribonucleoprotein</keyword>
<keyword id="KW-0689">Ribosomal protein</keyword>
<keyword id="KW-0694">RNA-binding</keyword>
<keyword id="KW-0699">rRNA-binding</keyword>
<accession>B7HGD4</accession>
<protein>
    <recommendedName>
        <fullName evidence="1">Small ribosomal subunit protein bS6</fullName>
    </recommendedName>
    <alternativeName>
        <fullName evidence="2">30S ribosomal protein S6</fullName>
    </alternativeName>
</protein>
<organism>
    <name type="scientific">Bacillus cereus (strain B4264)</name>
    <dbReference type="NCBI Taxonomy" id="405532"/>
    <lineage>
        <taxon>Bacteria</taxon>
        <taxon>Bacillati</taxon>
        <taxon>Bacillota</taxon>
        <taxon>Bacilli</taxon>
        <taxon>Bacillales</taxon>
        <taxon>Bacillaceae</taxon>
        <taxon>Bacillus</taxon>
        <taxon>Bacillus cereus group</taxon>
    </lineage>
</organism>
<gene>
    <name evidence="1" type="primary">rpsF</name>
    <name type="ordered locus">BCB4264_A5601</name>
</gene>